<comment type="function">
    <text evidence="1">Catalyzes the hydrolysis of esters.</text>
</comment>
<comment type="catalytic activity">
    <reaction evidence="1">
        <text>a carboxylic ester + H2O = an alcohol + a carboxylate + H(+)</text>
        <dbReference type="Rhea" id="RHEA:21164"/>
        <dbReference type="ChEBI" id="CHEBI:15377"/>
        <dbReference type="ChEBI" id="CHEBI:15378"/>
        <dbReference type="ChEBI" id="CHEBI:29067"/>
        <dbReference type="ChEBI" id="CHEBI:30879"/>
        <dbReference type="ChEBI" id="CHEBI:33308"/>
        <dbReference type="EC" id="3.1.1.1"/>
    </reaction>
</comment>
<comment type="similarity">
    <text evidence="1">Belongs to the FrsA family.</text>
</comment>
<feature type="chain" id="PRO_1000136513" description="Esterase FrsA">
    <location>
        <begin position="1"/>
        <end position="414"/>
    </location>
</feature>
<keyword id="KW-0378">Hydrolase</keyword>
<keyword id="KW-0719">Serine esterase</keyword>
<sequence>MTQANLSETLFKPRFKHPETSTLVRRFNHGAQPPVQSALDGKTIPHWYRMINRLMWIWRGIDPREILDVQARIVMSDAERTDDDLYDTVIGYRGGNWIYEWATQAMVWQQKACAEDDPQLSGRHWLHAATLYNIAAYPHLKGDDLAEQAQALSNRAYEEAAQRLPGTMRQMEFTVPGGAPITGFLHMPKGDGPFPTVLMCGGLDAMQTDYYSLYERYFAPRGIAMLTIDMPSVGFSSKWKLTQDSSLLHQHVLKALPNVPWVDHTRVAAFGFRFGANVAVRLAYLESPRLKAVACLGPVVHTLLSDFKCQQQVPEMYLDVLASRLGMHDASDEALRVELNRYSLKVQGLLGRRCPTPMLSGYWKNDPFSPEEDSRLITSSSADGKLLEIPFNPVYRNFDKGLQEITDWIEKRLC</sequence>
<gene>
    <name evidence="1" type="primary">frsA</name>
    <name type="ordered locus">ECDH10B_0221</name>
</gene>
<dbReference type="EC" id="3.1.1.1" evidence="1"/>
<dbReference type="EMBL" id="CP000948">
    <property type="protein sequence ID" value="ACB01406.1"/>
    <property type="molecule type" value="Genomic_DNA"/>
</dbReference>
<dbReference type="RefSeq" id="WP_000189532.1">
    <property type="nucleotide sequence ID" value="NC_010473.1"/>
</dbReference>
<dbReference type="SMR" id="B1XDY2"/>
<dbReference type="ESTHER" id="ecoli-yafa">
    <property type="family name" value="Duf_1100-R"/>
</dbReference>
<dbReference type="KEGG" id="ecd:ECDH10B_0221"/>
<dbReference type="HOGENOM" id="CLU_036819_0_0_6"/>
<dbReference type="GO" id="GO:0106435">
    <property type="term" value="F:carboxylesterase activity"/>
    <property type="evidence" value="ECO:0007669"/>
    <property type="project" value="UniProtKB-EC"/>
</dbReference>
<dbReference type="FunFam" id="3.40.50.1820:FF:000022">
    <property type="entry name" value="Esterase FrsA"/>
    <property type="match status" value="1"/>
</dbReference>
<dbReference type="Gene3D" id="3.40.50.1820">
    <property type="entry name" value="alpha/beta hydrolase"/>
    <property type="match status" value="1"/>
</dbReference>
<dbReference type="HAMAP" id="MF_01063">
    <property type="entry name" value="FrsA"/>
    <property type="match status" value="1"/>
</dbReference>
<dbReference type="InterPro" id="IPR029058">
    <property type="entry name" value="AB_hydrolase_fold"/>
</dbReference>
<dbReference type="InterPro" id="IPR043423">
    <property type="entry name" value="FrsA"/>
</dbReference>
<dbReference type="InterPro" id="IPR010520">
    <property type="entry name" value="FrsA-like"/>
</dbReference>
<dbReference type="InterPro" id="IPR050261">
    <property type="entry name" value="FrsA_esterase"/>
</dbReference>
<dbReference type="NCBIfam" id="NF003460">
    <property type="entry name" value="PRK05077.1"/>
    <property type="match status" value="1"/>
</dbReference>
<dbReference type="PANTHER" id="PTHR22946">
    <property type="entry name" value="DIENELACTONE HYDROLASE DOMAIN-CONTAINING PROTEIN-RELATED"/>
    <property type="match status" value="1"/>
</dbReference>
<dbReference type="PANTHER" id="PTHR22946:SF4">
    <property type="entry name" value="ESTERASE FRSA"/>
    <property type="match status" value="1"/>
</dbReference>
<dbReference type="Pfam" id="PF06500">
    <property type="entry name" value="FrsA-like"/>
    <property type="match status" value="1"/>
</dbReference>
<dbReference type="SUPFAM" id="SSF53474">
    <property type="entry name" value="alpha/beta-Hydrolases"/>
    <property type="match status" value="1"/>
</dbReference>
<name>FRSA_ECODH</name>
<proteinExistence type="inferred from homology"/>
<evidence type="ECO:0000255" key="1">
    <source>
        <dbReference type="HAMAP-Rule" id="MF_01063"/>
    </source>
</evidence>
<organism>
    <name type="scientific">Escherichia coli (strain K12 / DH10B)</name>
    <dbReference type="NCBI Taxonomy" id="316385"/>
    <lineage>
        <taxon>Bacteria</taxon>
        <taxon>Pseudomonadati</taxon>
        <taxon>Pseudomonadota</taxon>
        <taxon>Gammaproteobacteria</taxon>
        <taxon>Enterobacterales</taxon>
        <taxon>Enterobacteriaceae</taxon>
        <taxon>Escherichia</taxon>
    </lineage>
</organism>
<accession>B1XDY2</accession>
<reference key="1">
    <citation type="journal article" date="2008" name="J. Bacteriol.">
        <title>The complete genome sequence of Escherichia coli DH10B: insights into the biology of a laboratory workhorse.</title>
        <authorList>
            <person name="Durfee T."/>
            <person name="Nelson R."/>
            <person name="Baldwin S."/>
            <person name="Plunkett G. III"/>
            <person name="Burland V."/>
            <person name="Mau B."/>
            <person name="Petrosino J.F."/>
            <person name="Qin X."/>
            <person name="Muzny D.M."/>
            <person name="Ayele M."/>
            <person name="Gibbs R.A."/>
            <person name="Csorgo B."/>
            <person name="Posfai G."/>
            <person name="Weinstock G.M."/>
            <person name="Blattner F.R."/>
        </authorList>
    </citation>
    <scope>NUCLEOTIDE SEQUENCE [LARGE SCALE GENOMIC DNA]</scope>
    <source>
        <strain>K12 / DH10B</strain>
    </source>
</reference>
<protein>
    <recommendedName>
        <fullName evidence="1">Esterase FrsA</fullName>
        <ecNumber evidence="1">3.1.1.1</ecNumber>
    </recommendedName>
</protein>